<protein>
    <recommendedName>
        <fullName evidence="1">CTP synthase</fullName>
        <ecNumber evidence="1 2">6.3.4.2</ecNumber>
    </recommendedName>
    <alternativeName>
        <fullName evidence="1">Cytidine 5'-triphosphate synthase</fullName>
    </alternativeName>
    <alternativeName>
        <fullName evidence="1">Cytidine triphosphate synthetase</fullName>
        <shortName evidence="1 3">CTP synthetase</shortName>
        <shortName evidence="1">CTPS</shortName>
    </alternativeName>
    <alternativeName>
        <fullName evidence="1">UTP--ammonia ligase</fullName>
    </alternativeName>
</protein>
<organism>
    <name type="scientific">Chlamydia trachomatis serovar D (strain ATCC VR-885 / DSM 19411 / UW-3/Cx)</name>
    <dbReference type="NCBI Taxonomy" id="272561"/>
    <lineage>
        <taxon>Bacteria</taxon>
        <taxon>Pseudomonadati</taxon>
        <taxon>Chlamydiota</taxon>
        <taxon>Chlamydiia</taxon>
        <taxon>Chlamydiales</taxon>
        <taxon>Chlamydiaceae</taxon>
        <taxon>Chlamydia/Chlamydophila group</taxon>
        <taxon>Chlamydia</taxon>
    </lineage>
</organism>
<comment type="function">
    <text evidence="1 2">Catalyzes the ATP-dependent amination of UTP to CTP with either L-glutamine or ammonia as the source of nitrogen. May be involved in lipopolysaccharide biosynthesis, potentially channelling CTP directly to CMP-KDO synthetase (PubMed:8951811). Regulates intracellular CTP levels through interactions with the four ribonucleotide triphosphates (By similarity).</text>
</comment>
<comment type="catalytic activity">
    <reaction evidence="1 2">
        <text>UTP + L-glutamine + ATP + H2O = CTP + L-glutamate + ADP + phosphate + 2 H(+)</text>
        <dbReference type="Rhea" id="RHEA:26426"/>
        <dbReference type="ChEBI" id="CHEBI:15377"/>
        <dbReference type="ChEBI" id="CHEBI:15378"/>
        <dbReference type="ChEBI" id="CHEBI:29985"/>
        <dbReference type="ChEBI" id="CHEBI:30616"/>
        <dbReference type="ChEBI" id="CHEBI:37563"/>
        <dbReference type="ChEBI" id="CHEBI:43474"/>
        <dbReference type="ChEBI" id="CHEBI:46398"/>
        <dbReference type="ChEBI" id="CHEBI:58359"/>
        <dbReference type="ChEBI" id="CHEBI:456216"/>
        <dbReference type="EC" id="6.3.4.2"/>
    </reaction>
</comment>
<comment type="catalytic activity">
    <reaction evidence="1">
        <text>L-glutamine + H2O = L-glutamate + NH4(+)</text>
        <dbReference type="Rhea" id="RHEA:15889"/>
        <dbReference type="ChEBI" id="CHEBI:15377"/>
        <dbReference type="ChEBI" id="CHEBI:28938"/>
        <dbReference type="ChEBI" id="CHEBI:29985"/>
        <dbReference type="ChEBI" id="CHEBI:58359"/>
    </reaction>
</comment>
<comment type="catalytic activity">
    <reaction evidence="1">
        <text>UTP + NH4(+) + ATP = CTP + ADP + phosphate + 2 H(+)</text>
        <dbReference type="Rhea" id="RHEA:16597"/>
        <dbReference type="ChEBI" id="CHEBI:15378"/>
        <dbReference type="ChEBI" id="CHEBI:28938"/>
        <dbReference type="ChEBI" id="CHEBI:30616"/>
        <dbReference type="ChEBI" id="CHEBI:37563"/>
        <dbReference type="ChEBI" id="CHEBI:43474"/>
        <dbReference type="ChEBI" id="CHEBI:46398"/>
        <dbReference type="ChEBI" id="CHEBI:456216"/>
    </reaction>
</comment>
<comment type="activity regulation">
    <text evidence="1">Allosterically activated by GTP, when glutamine is the substrate; GTP has no effect on the reaction when ammonia is the substrate. The allosteric effector GTP functions by stabilizing the protein conformation that binds the tetrahedral intermediate(s) formed during glutamine hydrolysis. Inhibited by the product CTP, via allosteric rather than competitive inhibition.</text>
</comment>
<comment type="pathway">
    <text evidence="1">Pyrimidine metabolism; CTP biosynthesis via de novo pathway; CTP from UDP: step 2/2.</text>
</comment>
<comment type="subunit">
    <text evidence="1">Homotetramer.</text>
</comment>
<comment type="developmental stage">
    <text evidence="2">Expressed primarily during the mid- and late stages of chlamydial growth, and can be detected in both reticulate bodies (RBs) and elementary bodies (EBs).</text>
</comment>
<comment type="miscellaneous">
    <text evidence="1">CTPSs have evolved a hybrid strategy for distinguishing between UTP and CTP. The overlapping regions of the product feedback inhibitory and substrate sites recognize a common feature in both compounds, the triphosphate moiety. To differentiate isosteric substrate and product pyrimidine rings, an additional pocket far from the expected kinase/ligase catalytic site, specifically recognizes the cytosine and ribose portions of the product inhibitor.</text>
</comment>
<comment type="similarity">
    <text evidence="1">Belongs to the CTP synthase family.</text>
</comment>
<sequence length="539" mass="60203">MSFKSIFLTGGVVSSLGKGLTAASLALLLERQDLKVAMLKLDPYLNVDPGTMNPYEHGEVYVTDDGVETDLDLGHYHRFSSVQLSKYSTATSGQIYTKVLTKERNGEFLGSTVQVIPHVTNEIINVIQSCADHHKPDILIVEIGGTIGDIESLPFLEAVRQFRCEHPQDCLSIHMTYVPYLRAAKEIKTKPTQHSVQNLRSIGISPDVILCRSEAPLSTEVKRKISLFCNVPEHAVFNAIDLERSIYEMPLLLAKENISDFLLNKLGFSPKPLDLSDWQDLVEALCDKERQHVRIGLVGKYLEHKDAYKSVFESLFHASVPANCSLELVPIAPESEDLLEQLSQCDGCLIPGGFGTRSWEGKISAARYCRERNIPCFGICLGMQALVVEYARNVLDKPLANSMEINPETPDPVVCMMEGQDSVVKGGTMRLGAYPCRIAPGSLASAAYKTDLVQERHRHRYEVNPSYIERLEEHGLKIAGVCPLGELCEIVEIPNHRWMLGVQFHPEFLSKLAKPHPLFIEFIRAAKAYSLEKANHEHR</sequence>
<name>PYRG_CHLTR</name>
<gene>
    <name evidence="1" type="primary">pyrG</name>
    <name type="ordered locus">CT_183</name>
</gene>
<dbReference type="EC" id="6.3.4.2" evidence="1 2"/>
<dbReference type="EMBL" id="U15192">
    <property type="protein sequence ID" value="AAA80195.1"/>
    <property type="molecule type" value="Genomic_DNA"/>
</dbReference>
<dbReference type="EMBL" id="AE001273">
    <property type="protein sequence ID" value="AAC67775.1"/>
    <property type="molecule type" value="Genomic_DNA"/>
</dbReference>
<dbReference type="PIR" id="B56447">
    <property type="entry name" value="B56447"/>
</dbReference>
<dbReference type="PIR" id="H71545">
    <property type="entry name" value="H71545"/>
</dbReference>
<dbReference type="RefSeq" id="NP_219687.1">
    <property type="nucleotide sequence ID" value="NC_000117.1"/>
</dbReference>
<dbReference type="RefSeq" id="WP_009871529.1">
    <property type="nucleotide sequence ID" value="NC_000117.1"/>
</dbReference>
<dbReference type="SMR" id="Q59321"/>
<dbReference type="FunCoup" id="Q59321">
    <property type="interactions" value="244"/>
</dbReference>
<dbReference type="STRING" id="272561.CT_183"/>
<dbReference type="MEROPS" id="C26.964"/>
<dbReference type="EnsemblBacteria" id="AAC67775">
    <property type="protein sequence ID" value="AAC67775"/>
    <property type="gene ID" value="CT_183"/>
</dbReference>
<dbReference type="GeneID" id="884940"/>
<dbReference type="KEGG" id="ctr:CT_183"/>
<dbReference type="PATRIC" id="fig|272561.5.peg.197"/>
<dbReference type="HOGENOM" id="CLU_011675_5_0_0"/>
<dbReference type="InParanoid" id="Q59321"/>
<dbReference type="OrthoDB" id="9801107at2"/>
<dbReference type="UniPathway" id="UPA00159">
    <property type="reaction ID" value="UER00277"/>
</dbReference>
<dbReference type="Proteomes" id="UP000000431">
    <property type="component" value="Chromosome"/>
</dbReference>
<dbReference type="GO" id="GO:0005829">
    <property type="term" value="C:cytosol"/>
    <property type="evidence" value="ECO:0000318"/>
    <property type="project" value="GO_Central"/>
</dbReference>
<dbReference type="GO" id="GO:0005524">
    <property type="term" value="F:ATP binding"/>
    <property type="evidence" value="ECO:0007669"/>
    <property type="project" value="UniProtKB-KW"/>
</dbReference>
<dbReference type="GO" id="GO:0003883">
    <property type="term" value="F:CTP synthase activity"/>
    <property type="evidence" value="ECO:0000318"/>
    <property type="project" value="GO_Central"/>
</dbReference>
<dbReference type="GO" id="GO:0004359">
    <property type="term" value="F:glutaminase activity"/>
    <property type="evidence" value="ECO:0007669"/>
    <property type="project" value="RHEA"/>
</dbReference>
<dbReference type="GO" id="GO:0042802">
    <property type="term" value="F:identical protein binding"/>
    <property type="evidence" value="ECO:0000318"/>
    <property type="project" value="GO_Central"/>
</dbReference>
<dbReference type="GO" id="GO:0046872">
    <property type="term" value="F:metal ion binding"/>
    <property type="evidence" value="ECO:0007669"/>
    <property type="project" value="UniProtKB-KW"/>
</dbReference>
<dbReference type="GO" id="GO:0044210">
    <property type="term" value="P:'de novo' CTP biosynthetic process"/>
    <property type="evidence" value="ECO:0007669"/>
    <property type="project" value="UniProtKB-UniRule"/>
</dbReference>
<dbReference type="GO" id="GO:0006241">
    <property type="term" value="P:CTP biosynthetic process"/>
    <property type="evidence" value="ECO:0000318"/>
    <property type="project" value="GO_Central"/>
</dbReference>
<dbReference type="GO" id="GO:0019856">
    <property type="term" value="P:pyrimidine nucleobase biosynthetic process"/>
    <property type="evidence" value="ECO:0000318"/>
    <property type="project" value="GO_Central"/>
</dbReference>
<dbReference type="CDD" id="cd03113">
    <property type="entry name" value="CTPS_N"/>
    <property type="match status" value="1"/>
</dbReference>
<dbReference type="CDD" id="cd01746">
    <property type="entry name" value="GATase1_CTP_Synthase"/>
    <property type="match status" value="1"/>
</dbReference>
<dbReference type="FunFam" id="3.40.50.300:FF:000009">
    <property type="entry name" value="CTP synthase"/>
    <property type="match status" value="1"/>
</dbReference>
<dbReference type="FunFam" id="3.40.50.880:FF:000002">
    <property type="entry name" value="CTP synthase"/>
    <property type="match status" value="1"/>
</dbReference>
<dbReference type="Gene3D" id="3.40.50.880">
    <property type="match status" value="1"/>
</dbReference>
<dbReference type="Gene3D" id="3.40.50.300">
    <property type="entry name" value="P-loop containing nucleotide triphosphate hydrolases"/>
    <property type="match status" value="1"/>
</dbReference>
<dbReference type="HAMAP" id="MF_01227">
    <property type="entry name" value="PyrG"/>
    <property type="match status" value="1"/>
</dbReference>
<dbReference type="InterPro" id="IPR029062">
    <property type="entry name" value="Class_I_gatase-like"/>
</dbReference>
<dbReference type="InterPro" id="IPR004468">
    <property type="entry name" value="CTP_synthase"/>
</dbReference>
<dbReference type="InterPro" id="IPR017456">
    <property type="entry name" value="CTP_synthase_N"/>
</dbReference>
<dbReference type="InterPro" id="IPR017926">
    <property type="entry name" value="GATASE"/>
</dbReference>
<dbReference type="InterPro" id="IPR033828">
    <property type="entry name" value="GATase1_CTP_Synthase"/>
</dbReference>
<dbReference type="InterPro" id="IPR027417">
    <property type="entry name" value="P-loop_NTPase"/>
</dbReference>
<dbReference type="NCBIfam" id="NF003792">
    <property type="entry name" value="PRK05380.1"/>
    <property type="match status" value="1"/>
</dbReference>
<dbReference type="NCBIfam" id="TIGR00337">
    <property type="entry name" value="PyrG"/>
    <property type="match status" value="1"/>
</dbReference>
<dbReference type="PANTHER" id="PTHR11550">
    <property type="entry name" value="CTP SYNTHASE"/>
    <property type="match status" value="1"/>
</dbReference>
<dbReference type="PANTHER" id="PTHR11550:SF0">
    <property type="entry name" value="CTP SYNTHASE-RELATED"/>
    <property type="match status" value="1"/>
</dbReference>
<dbReference type="Pfam" id="PF06418">
    <property type="entry name" value="CTP_synth_N"/>
    <property type="match status" value="1"/>
</dbReference>
<dbReference type="Pfam" id="PF00117">
    <property type="entry name" value="GATase"/>
    <property type="match status" value="1"/>
</dbReference>
<dbReference type="SUPFAM" id="SSF52317">
    <property type="entry name" value="Class I glutamine amidotransferase-like"/>
    <property type="match status" value="1"/>
</dbReference>
<dbReference type="SUPFAM" id="SSF52540">
    <property type="entry name" value="P-loop containing nucleoside triphosphate hydrolases"/>
    <property type="match status" value="1"/>
</dbReference>
<dbReference type="PROSITE" id="PS51273">
    <property type="entry name" value="GATASE_TYPE_1"/>
    <property type="match status" value="1"/>
</dbReference>
<reference key="1">
    <citation type="journal article" date="1995" name="J. Biol. Chem.">
        <title>Cloning and expression of the Chlamydia trachomatis gene for CTP synthetase.</title>
        <authorList>
            <person name="Tipples G."/>
            <person name="McClarty G."/>
        </authorList>
    </citation>
    <scope>NUCLEOTIDE SEQUENCE [GENOMIC DNA]</scope>
    <source>
        <strain>L2</strain>
    </source>
</reference>
<reference key="2">
    <citation type="journal article" date="1998" name="Science">
        <title>Genome sequence of an obligate intracellular pathogen of humans: Chlamydia trachomatis.</title>
        <authorList>
            <person name="Stephens R.S."/>
            <person name="Kalman S."/>
            <person name="Lammel C.J."/>
            <person name="Fan J."/>
            <person name="Marathe R."/>
            <person name="Aravind L."/>
            <person name="Mitchell W.P."/>
            <person name="Olinger L."/>
            <person name="Tatusov R.L."/>
            <person name="Zhao Q."/>
            <person name="Koonin E.V."/>
            <person name="Davis R.W."/>
        </authorList>
    </citation>
    <scope>NUCLEOTIDE SEQUENCE [LARGE SCALE GENOMIC DNA]</scope>
    <source>
        <strain>ATCC VR-885 / DSM 19411 / UW-3/Cx</strain>
    </source>
</reference>
<reference key="3">
    <citation type="journal article" date="1996" name="Mol. Microbiol.">
        <title>Chlamydia trachomatis CTP synthetase: molecular characterization and developmental regulation of expression.</title>
        <authorList>
            <person name="Wylie J.L."/>
            <person name="Berry J.D."/>
            <person name="McClarty G."/>
        </authorList>
    </citation>
    <scope>FUNCTION</scope>
    <scope>CATALYTIC ACTIVITY</scope>
    <scope>DEVELOPMENTAL STAGE</scope>
</reference>
<keyword id="KW-0067">ATP-binding</keyword>
<keyword id="KW-0315">Glutamine amidotransferase</keyword>
<keyword id="KW-0436">Ligase</keyword>
<keyword id="KW-0460">Magnesium</keyword>
<keyword id="KW-0479">Metal-binding</keyword>
<keyword id="KW-0547">Nucleotide-binding</keyword>
<keyword id="KW-0665">Pyrimidine biosynthesis</keyword>
<keyword id="KW-1185">Reference proteome</keyword>
<proteinExistence type="evidence at protein level"/>
<accession>Q59321</accession>
<accession>O84186</accession>
<evidence type="ECO:0000255" key="1">
    <source>
        <dbReference type="HAMAP-Rule" id="MF_01227"/>
    </source>
</evidence>
<evidence type="ECO:0000269" key="2">
    <source>
    </source>
</evidence>
<evidence type="ECO:0000303" key="3">
    <source>
    </source>
</evidence>
<feature type="chain" id="PRO_0000138178" description="CTP synthase">
    <location>
        <begin position="1"/>
        <end position="539"/>
    </location>
</feature>
<feature type="domain" description="Glutamine amidotransferase type-1" evidence="1">
    <location>
        <begin position="294"/>
        <end position="532"/>
    </location>
</feature>
<feature type="region of interest" description="Amidoligase domain" evidence="1">
    <location>
        <begin position="1"/>
        <end position="268"/>
    </location>
</feature>
<feature type="active site" description="Nucleophile; for glutamine hydrolysis" evidence="1">
    <location>
        <position position="380"/>
    </location>
</feature>
<feature type="active site" evidence="1">
    <location>
        <position position="505"/>
    </location>
</feature>
<feature type="active site" evidence="1">
    <location>
        <position position="507"/>
    </location>
</feature>
<feature type="binding site" evidence="1">
    <location>
        <position position="14"/>
    </location>
    <ligand>
        <name>CTP</name>
        <dbReference type="ChEBI" id="CHEBI:37563"/>
        <note>allosteric inhibitor</note>
    </ligand>
</feature>
<feature type="binding site" evidence="1">
    <location>
        <position position="14"/>
    </location>
    <ligand>
        <name>UTP</name>
        <dbReference type="ChEBI" id="CHEBI:46398"/>
    </ligand>
</feature>
<feature type="binding site" evidence="1">
    <location>
        <begin position="15"/>
        <end position="20"/>
    </location>
    <ligand>
        <name>ATP</name>
        <dbReference type="ChEBI" id="CHEBI:30616"/>
    </ligand>
</feature>
<feature type="binding site" evidence="1">
    <location>
        <position position="55"/>
    </location>
    <ligand>
        <name>L-glutamine</name>
        <dbReference type="ChEBI" id="CHEBI:58359"/>
    </ligand>
</feature>
<feature type="binding site" evidence="1">
    <location>
        <position position="72"/>
    </location>
    <ligand>
        <name>ATP</name>
        <dbReference type="ChEBI" id="CHEBI:30616"/>
    </ligand>
</feature>
<feature type="binding site" evidence="1">
    <location>
        <position position="72"/>
    </location>
    <ligand>
        <name>Mg(2+)</name>
        <dbReference type="ChEBI" id="CHEBI:18420"/>
    </ligand>
</feature>
<feature type="binding site" evidence="1">
    <location>
        <position position="142"/>
    </location>
    <ligand>
        <name>Mg(2+)</name>
        <dbReference type="ChEBI" id="CHEBI:18420"/>
    </ligand>
</feature>
<feature type="binding site" evidence="1">
    <location>
        <begin position="149"/>
        <end position="151"/>
    </location>
    <ligand>
        <name>CTP</name>
        <dbReference type="ChEBI" id="CHEBI:37563"/>
        <note>allosteric inhibitor</note>
    </ligand>
</feature>
<feature type="binding site" evidence="1">
    <location>
        <begin position="188"/>
        <end position="193"/>
    </location>
    <ligand>
        <name>CTP</name>
        <dbReference type="ChEBI" id="CHEBI:37563"/>
        <note>allosteric inhibitor</note>
    </ligand>
</feature>
<feature type="binding site" evidence="1">
    <location>
        <begin position="188"/>
        <end position="193"/>
    </location>
    <ligand>
        <name>UTP</name>
        <dbReference type="ChEBI" id="CHEBI:46398"/>
    </ligand>
</feature>
<feature type="binding site" evidence="1">
    <location>
        <position position="224"/>
    </location>
    <ligand>
        <name>CTP</name>
        <dbReference type="ChEBI" id="CHEBI:37563"/>
        <note>allosteric inhibitor</note>
    </ligand>
</feature>
<feature type="binding site" evidence="1">
    <location>
        <position position="224"/>
    </location>
    <ligand>
        <name>UTP</name>
        <dbReference type="ChEBI" id="CHEBI:46398"/>
    </ligand>
</feature>
<feature type="binding site" evidence="1">
    <location>
        <position position="242"/>
    </location>
    <ligand>
        <name>ATP</name>
        <dbReference type="ChEBI" id="CHEBI:30616"/>
    </ligand>
</feature>
<feature type="binding site" evidence="1">
    <location>
        <position position="353"/>
    </location>
    <ligand>
        <name>L-glutamine</name>
        <dbReference type="ChEBI" id="CHEBI:58359"/>
    </ligand>
</feature>
<feature type="binding site" evidence="1">
    <location>
        <begin position="381"/>
        <end position="384"/>
    </location>
    <ligand>
        <name>L-glutamine</name>
        <dbReference type="ChEBI" id="CHEBI:58359"/>
    </ligand>
</feature>
<feature type="binding site" evidence="1">
    <location>
        <position position="404"/>
    </location>
    <ligand>
        <name>L-glutamine</name>
        <dbReference type="ChEBI" id="CHEBI:58359"/>
    </ligand>
</feature>
<feature type="binding site" evidence="1">
    <location>
        <position position="460"/>
    </location>
    <ligand>
        <name>L-glutamine</name>
        <dbReference type="ChEBI" id="CHEBI:58359"/>
    </ligand>
</feature>
<feature type="sequence variant" description="In strain: L2.">
    <original>T</original>
    <variation>I</variation>
    <location>
        <position position="89"/>
    </location>
</feature>
<feature type="sequence variant" description="In strain: L2.">
    <original>S</original>
    <variation>A</variation>
    <location>
        <position position="314"/>
    </location>
</feature>
<feature type="sequence variant" description="In strain: L2.">
    <original>R</original>
    <variation>Q</variation>
    <location>
        <position position="372"/>
    </location>
</feature>
<feature type="sequence variant" description="In strain: L2.">
    <original>I</original>
    <variation>M</variation>
    <location>
        <position position="405"/>
    </location>
</feature>